<comment type="function">
    <text evidence="1 2">Transports viral genome to neighboring plant cells directly through plasmosdesmata, without any budding. The movement protein allows efficient cell to cell propagation, by bypassing the host cell wall barrier. Forms a ribonucleoprotein complex with viral RNA. Binds microtubules and modulates microtubule stability. Can bind double-stranded DNA.</text>
</comment>
<comment type="subcellular location">
    <subcellularLocation>
        <location evidence="2">Host cytoplasm</location>
        <location evidence="2">Host cytoskeleton</location>
    </subcellularLocation>
    <subcellularLocation>
        <location evidence="2">Host cell junction</location>
        <location evidence="2">Host plasmodesma</location>
    </subcellularLocation>
</comment>
<comment type="similarity">
    <text evidence="4">Belongs to the tobamovirus movement protein family.</text>
</comment>
<reference key="1">
    <citation type="journal article" date="1988" name="Virology">
        <title>Interviral homologies of the 30K proteins of tobamoviruses.</title>
        <authorList>
            <person name="Saito T."/>
            <person name="Imai Y."/>
            <person name="Meshi T."/>
            <person name="Okada Y."/>
        </authorList>
    </citation>
    <scope>NUCLEOTIDE SEQUENCE [GENOMIC RNA]</scope>
</reference>
<dbReference type="EMBL" id="J04322">
    <property type="protein sequence ID" value="AAA46383.1"/>
    <property type="molecule type" value="Genomic_RNA"/>
</dbReference>
<dbReference type="PIR" id="JS0261">
    <property type="entry name" value="WMTMCV"/>
</dbReference>
<dbReference type="GO" id="GO:0030430">
    <property type="term" value="C:host cell cytoplasm"/>
    <property type="evidence" value="ECO:0007669"/>
    <property type="project" value="UniProtKB-KW"/>
</dbReference>
<dbReference type="GO" id="GO:0044219">
    <property type="term" value="C:host cell plasmodesma"/>
    <property type="evidence" value="ECO:0007669"/>
    <property type="project" value="UniProtKB-SubCell"/>
</dbReference>
<dbReference type="GO" id="GO:0044163">
    <property type="term" value="C:host cytoskeleton"/>
    <property type="evidence" value="ECO:0007669"/>
    <property type="project" value="UniProtKB-SubCell"/>
</dbReference>
<dbReference type="GO" id="GO:0003723">
    <property type="term" value="F:RNA binding"/>
    <property type="evidence" value="ECO:0007669"/>
    <property type="project" value="UniProtKB-KW"/>
</dbReference>
<dbReference type="GO" id="GO:0046740">
    <property type="term" value="P:transport of virus in host, cell to cell"/>
    <property type="evidence" value="ECO:0007669"/>
    <property type="project" value="UniProtKB-KW"/>
</dbReference>
<dbReference type="InterPro" id="IPR001022">
    <property type="entry name" value="TMV_movement"/>
</dbReference>
<dbReference type="InterPro" id="IPR028919">
    <property type="entry name" value="Viral_movement"/>
</dbReference>
<dbReference type="Pfam" id="PF01107">
    <property type="entry name" value="MP"/>
    <property type="match status" value="1"/>
</dbReference>
<dbReference type="PRINTS" id="PR00964">
    <property type="entry name" value="MOVEMENT"/>
</dbReference>
<proteinExistence type="inferred from homology"/>
<protein>
    <recommendedName>
        <fullName>Movement protein</fullName>
    </recommendedName>
    <alternativeName>
        <fullName>28.8 kDa protein</fullName>
    </alternativeName>
    <alternativeName>
        <fullName>Cell-to-cell transport protein</fullName>
    </alternativeName>
</protein>
<accession>P19522</accession>
<evidence type="ECO:0000250" key="1">
    <source>
        <dbReference type="UniProtKB" id="P03583"/>
    </source>
</evidence>
<evidence type="ECO:0000250" key="2">
    <source>
        <dbReference type="UniProtKB" id="P69513"/>
    </source>
</evidence>
<evidence type="ECO:0000256" key="3">
    <source>
        <dbReference type="SAM" id="MobiDB-lite"/>
    </source>
</evidence>
<evidence type="ECO:0000305" key="4"/>
<name>MVP_CGMVW</name>
<feature type="chain" id="PRO_0000144957" description="Movement protein">
    <location>
        <begin position="1"/>
        <end position="264"/>
    </location>
</feature>
<feature type="region of interest" description="Disordered" evidence="3">
    <location>
        <begin position="221"/>
        <end position="264"/>
    </location>
</feature>
<feature type="compositionally biased region" description="Basic residues" evidence="3">
    <location>
        <begin position="231"/>
        <end position="240"/>
    </location>
</feature>
<organismHost>
    <name type="scientific">Citrullus</name>
    <dbReference type="NCBI Taxonomy" id="3653"/>
</organismHost>
<organismHost>
    <name type="scientific">Cucumis sativus</name>
    <name type="common">Cucumber</name>
    <dbReference type="NCBI Taxonomy" id="3659"/>
</organismHost>
<organismHost>
    <name type="scientific">Lagenaria siceraria</name>
    <name type="common">Bottle gourd</name>
    <name type="synonym">Lagenaria leucantha</name>
    <dbReference type="NCBI Taxonomy" id="3668"/>
</organismHost>
<keyword id="KW-1031">Host cell junction</keyword>
<keyword id="KW-1035">Host cytoplasm</keyword>
<keyword id="KW-1037">Host cytoskeleton</keyword>
<keyword id="KW-0694">RNA-binding</keyword>
<keyword id="KW-0813">Transport</keyword>
<keyword id="KW-0916">Viral movement protein</keyword>
<gene>
    <name type="primary">MP</name>
</gene>
<organism>
    <name type="scientific">Cucumber green mottle mosaic virus (strain watermelon W)</name>
    <name type="common">CGMMV</name>
    <dbReference type="NCBI Taxonomy" id="12237"/>
    <lineage>
        <taxon>Viruses</taxon>
        <taxon>Riboviria</taxon>
        <taxon>Orthornavirae</taxon>
        <taxon>Kitrinoviricota</taxon>
        <taxon>Alsuviricetes</taxon>
        <taxon>Martellivirales</taxon>
        <taxon>Virgaviridae</taxon>
        <taxon>Tobamovirus</taxon>
        <taxon>Cucumber green mottle mosaic virus</taxon>
    </lineage>
</organism>
<sequence length="264" mass="28881">MSLSKVSVENSLKPEKFVKISWVDKLLPNYFSILKYLSITDFSVVKAQSYESLVPVKLLRGVDLTKHLYVTLLGVVVSGVWNVPESCRGGATVALVDTRMHSVAEGTICKFSAPATVREFSVRFIPNYSVVAADALRDPWSLFVRLSNVGIKDGFHPLTLEVACLVATTNSIIKKGLRASVVESVVSSDQSIVLDSLSEKVEPFFDKVPISAAVMARDPSYRSRSQSVSGRGKRHSKPPNRRLDSASEESSSVSFDDGLQSDHT</sequence>